<evidence type="ECO:0000255" key="1">
    <source>
        <dbReference type="HAMAP-Rule" id="MF_01165"/>
    </source>
</evidence>
<reference key="1">
    <citation type="journal article" date="2009" name="Genome Res.">
        <title>Newly introduced genomic prophage islands are critical determinants of in vivo competitiveness in the Liverpool epidemic strain of Pseudomonas aeruginosa.</title>
        <authorList>
            <person name="Winstanley C."/>
            <person name="Langille M.G.I."/>
            <person name="Fothergill J.L."/>
            <person name="Kukavica-Ibrulj I."/>
            <person name="Paradis-Bleau C."/>
            <person name="Sanschagrin F."/>
            <person name="Thomson N.R."/>
            <person name="Winsor G.L."/>
            <person name="Quail M.A."/>
            <person name="Lennard N."/>
            <person name="Bignell A."/>
            <person name="Clarke L."/>
            <person name="Seeger K."/>
            <person name="Saunders D."/>
            <person name="Harris D."/>
            <person name="Parkhill J."/>
            <person name="Hancock R.E.W."/>
            <person name="Brinkman F.S.L."/>
            <person name="Levesque R.C."/>
        </authorList>
    </citation>
    <scope>NUCLEOTIDE SEQUENCE [LARGE SCALE GENOMIC DNA]</scope>
    <source>
        <strain>LESB58</strain>
    </source>
</reference>
<gene>
    <name evidence="1" type="primary">arnT</name>
    <name type="ordered locus">PLES_14771</name>
</gene>
<protein>
    <recommendedName>
        <fullName evidence="1">Undecaprenyl phosphate-alpha-4-amino-4-deoxy-L-arabinose arabinosyl transferase</fullName>
        <ecNumber evidence="1">2.4.2.43</ecNumber>
    </recommendedName>
    <alternativeName>
        <fullName evidence="1">4-amino-4-deoxy-L-arabinose lipid A transferase</fullName>
    </alternativeName>
    <alternativeName>
        <fullName evidence="1">Lipid IV(A) 4-amino-4-deoxy-L-arabinosyltransferase</fullName>
    </alternativeName>
    <alternativeName>
        <fullName evidence="1">Undecaprenyl phosphate-alpha-L-Ara4N transferase</fullName>
    </alternativeName>
</protein>
<keyword id="KW-0997">Cell inner membrane</keyword>
<keyword id="KW-1003">Cell membrane</keyword>
<keyword id="KW-0328">Glycosyltransferase</keyword>
<keyword id="KW-0441">Lipid A biosynthesis</keyword>
<keyword id="KW-0444">Lipid biosynthesis</keyword>
<keyword id="KW-0443">Lipid metabolism</keyword>
<keyword id="KW-0448">Lipopolysaccharide biosynthesis</keyword>
<keyword id="KW-0472">Membrane</keyword>
<keyword id="KW-0808">Transferase</keyword>
<keyword id="KW-0812">Transmembrane</keyword>
<keyword id="KW-1133">Transmembrane helix</keyword>
<comment type="function">
    <text evidence="1">Catalyzes the transfer of the L-Ara4N moiety of the glycolipid undecaprenyl phosphate-alpha-L-Ara4N to lipid A. The modified arabinose is attached to lipid A and is required for resistance to polymyxin and cationic antimicrobial peptides.</text>
</comment>
<comment type="catalytic activity">
    <reaction evidence="1">
        <text>4-amino-4-deoxy-alpha-L-arabinopyranosyl di-trans,octa-cis-undecaprenyl phosphate + lipid IVA = lipid IIA + di-trans,octa-cis-undecaprenyl phosphate.</text>
        <dbReference type="EC" id="2.4.2.43"/>
    </reaction>
</comment>
<comment type="pathway">
    <text evidence="1">Lipopolysaccharide metabolism; 4-amino-4-deoxy-beta-L-arabinose-lipid A biosynthesis.</text>
</comment>
<comment type="subcellular location">
    <subcellularLocation>
        <location evidence="1">Cell inner membrane</location>
        <topology evidence="1">Multi-pass membrane protein</topology>
    </subcellularLocation>
</comment>
<comment type="similarity">
    <text evidence="1">Belongs to the glycosyltransferase 83 family.</text>
</comment>
<sequence>MSRRQTCSLLLIAFGLFYLVPLSNHGLWIPDETRYAQISQAMLLGGDWVSPHFLGLRYFEKPVAGYWMIALGQAVFGENLFGVRIASVVATALSVLLAYLLARRLWRDPRTSLACALLYASFGLIAGQSGYANLDPQFTFWVNLSLVALWHALDARSRRARLLGWTLLGLACGMGFLTKGFLAWLLPVLVALPYMLWQRRWRELLGYGALAVLAALLVCLPWALAVHAREADYWRFFFWHEHIRRFAGEDAQHSRPWWFYLPLLAVSCLPWSGLLPSALRQAWHERRQAPVVFLALWLLLPLAFFSLSRGKLPTYIMPCLLPLALLMGHALVQRLRLGNSVALRGNGLLNLGLALLALAALAYLQLRKPVYQEEPFELFLVLLVIGAWAAAGLAQWRYPLRAWAAPLLASWVLIALLPAAMPNHVVQNKTPDLFVAEHLDELTGARHLLSNDLGAASALAWRLRRSDVTLYDTRGELKYGLSYPEHSQRSVPLADIRQWLWRARQDGSVAVLLRINSASDRYQLALLPGDGERYRNGNLVLAILPQVRP</sequence>
<feature type="chain" id="PRO_0000380016" description="Undecaprenyl phosphate-alpha-4-amino-4-deoxy-L-arabinose arabinosyl transferase">
    <location>
        <begin position="1"/>
        <end position="549"/>
    </location>
</feature>
<feature type="transmembrane region" description="Helical" evidence="1">
    <location>
        <begin position="9"/>
        <end position="29"/>
    </location>
</feature>
<feature type="transmembrane region" description="Helical" evidence="1">
    <location>
        <begin position="80"/>
        <end position="100"/>
    </location>
</feature>
<feature type="transmembrane region" description="Helical" evidence="1">
    <location>
        <begin position="112"/>
        <end position="132"/>
    </location>
</feature>
<feature type="transmembrane region" description="Helical" evidence="1">
    <location>
        <begin position="133"/>
        <end position="153"/>
    </location>
</feature>
<feature type="transmembrane region" description="Helical" evidence="1">
    <location>
        <begin position="176"/>
        <end position="196"/>
    </location>
</feature>
<feature type="transmembrane region" description="Helical" evidence="1">
    <location>
        <begin position="204"/>
        <end position="224"/>
    </location>
</feature>
<feature type="transmembrane region" description="Helical" evidence="1">
    <location>
        <begin position="256"/>
        <end position="276"/>
    </location>
</feature>
<feature type="transmembrane region" description="Helical" evidence="1">
    <location>
        <begin position="288"/>
        <end position="308"/>
    </location>
</feature>
<feature type="transmembrane region" description="Helical" evidence="1">
    <location>
        <begin position="312"/>
        <end position="332"/>
    </location>
</feature>
<feature type="transmembrane region" description="Helical" evidence="1">
    <location>
        <begin position="346"/>
        <end position="366"/>
    </location>
</feature>
<feature type="transmembrane region" description="Helical" evidence="1">
    <location>
        <begin position="376"/>
        <end position="396"/>
    </location>
</feature>
<feature type="transmembrane region" description="Helical" evidence="1">
    <location>
        <begin position="402"/>
        <end position="422"/>
    </location>
</feature>
<organism>
    <name type="scientific">Pseudomonas aeruginosa (strain LESB58)</name>
    <dbReference type="NCBI Taxonomy" id="557722"/>
    <lineage>
        <taxon>Bacteria</taxon>
        <taxon>Pseudomonadati</taxon>
        <taxon>Pseudomonadota</taxon>
        <taxon>Gammaproteobacteria</taxon>
        <taxon>Pseudomonadales</taxon>
        <taxon>Pseudomonadaceae</taxon>
        <taxon>Pseudomonas</taxon>
    </lineage>
</organism>
<accession>B7VBN0</accession>
<dbReference type="EC" id="2.4.2.43" evidence="1"/>
<dbReference type="EMBL" id="FM209186">
    <property type="protein sequence ID" value="CAW26205.1"/>
    <property type="molecule type" value="Genomic_DNA"/>
</dbReference>
<dbReference type="RefSeq" id="WP_012613746.1">
    <property type="nucleotide sequence ID" value="NC_011770.1"/>
</dbReference>
<dbReference type="SMR" id="B7VBN0"/>
<dbReference type="CAZy" id="GT83">
    <property type="family name" value="Glycosyltransferase Family 83"/>
</dbReference>
<dbReference type="KEGG" id="pag:PLES_14771"/>
<dbReference type="HOGENOM" id="CLU_019200_2_1_6"/>
<dbReference type="UniPathway" id="UPA00037"/>
<dbReference type="GO" id="GO:0005886">
    <property type="term" value="C:plasma membrane"/>
    <property type="evidence" value="ECO:0007669"/>
    <property type="project" value="UniProtKB-SubCell"/>
</dbReference>
<dbReference type="GO" id="GO:0103015">
    <property type="term" value="F:4-amino-4-deoxy-L-arabinose transferase activity"/>
    <property type="evidence" value="ECO:0007669"/>
    <property type="project" value="UniProtKB-EC"/>
</dbReference>
<dbReference type="GO" id="GO:0000030">
    <property type="term" value="F:mannosyltransferase activity"/>
    <property type="evidence" value="ECO:0007669"/>
    <property type="project" value="InterPro"/>
</dbReference>
<dbReference type="GO" id="GO:0009245">
    <property type="term" value="P:lipid A biosynthetic process"/>
    <property type="evidence" value="ECO:0007669"/>
    <property type="project" value="UniProtKB-UniRule"/>
</dbReference>
<dbReference type="GO" id="GO:0009103">
    <property type="term" value="P:lipopolysaccharide biosynthetic process"/>
    <property type="evidence" value="ECO:0007669"/>
    <property type="project" value="UniProtKB-KW"/>
</dbReference>
<dbReference type="GO" id="GO:0006493">
    <property type="term" value="P:protein O-linked glycosylation"/>
    <property type="evidence" value="ECO:0007669"/>
    <property type="project" value="InterPro"/>
</dbReference>
<dbReference type="GO" id="GO:0010041">
    <property type="term" value="P:response to iron(III) ion"/>
    <property type="evidence" value="ECO:0007669"/>
    <property type="project" value="TreeGrafter"/>
</dbReference>
<dbReference type="HAMAP" id="MF_01165">
    <property type="entry name" value="ArnT_transfer"/>
    <property type="match status" value="1"/>
</dbReference>
<dbReference type="InterPro" id="IPR022839">
    <property type="entry name" value="ArnT_tfrase"/>
</dbReference>
<dbReference type="InterPro" id="IPR003342">
    <property type="entry name" value="Glyco_trans_39/83"/>
</dbReference>
<dbReference type="InterPro" id="IPR050297">
    <property type="entry name" value="LipidA_mod_glycosyltrf_83"/>
</dbReference>
<dbReference type="NCBIfam" id="NF009784">
    <property type="entry name" value="PRK13279.1"/>
    <property type="match status" value="1"/>
</dbReference>
<dbReference type="PANTHER" id="PTHR33908">
    <property type="entry name" value="MANNOSYLTRANSFERASE YKCB-RELATED"/>
    <property type="match status" value="1"/>
</dbReference>
<dbReference type="PANTHER" id="PTHR33908:SF3">
    <property type="entry name" value="UNDECAPRENYL PHOSPHATE-ALPHA-4-AMINO-4-DEOXY-L-ARABINOSE ARABINOSYL TRANSFERASE"/>
    <property type="match status" value="1"/>
</dbReference>
<dbReference type="Pfam" id="PF02366">
    <property type="entry name" value="PMT"/>
    <property type="match status" value="1"/>
</dbReference>
<name>ARNT_PSEA8</name>
<proteinExistence type="inferred from homology"/>